<geneLocation type="chloroplast"/>
<protein>
    <recommendedName>
        <fullName evidence="1">Photosystem II reaction center protein L</fullName>
        <shortName evidence="1">PSII-L</shortName>
    </recommendedName>
</protein>
<gene>
    <name evidence="1" type="primary">psbL</name>
    <name type="ordered locus">LOC_Osp1g00500</name>
</gene>
<proteinExistence type="inferred from homology"/>
<organism>
    <name type="scientific">Oryza sativa subsp. japonica</name>
    <name type="common">Rice</name>
    <dbReference type="NCBI Taxonomy" id="39947"/>
    <lineage>
        <taxon>Eukaryota</taxon>
        <taxon>Viridiplantae</taxon>
        <taxon>Streptophyta</taxon>
        <taxon>Embryophyta</taxon>
        <taxon>Tracheophyta</taxon>
        <taxon>Spermatophyta</taxon>
        <taxon>Magnoliopsida</taxon>
        <taxon>Liliopsida</taxon>
        <taxon>Poales</taxon>
        <taxon>Poaceae</taxon>
        <taxon>BOP clade</taxon>
        <taxon>Oryzoideae</taxon>
        <taxon>Oryzeae</taxon>
        <taxon>Oryzinae</taxon>
        <taxon>Oryza</taxon>
        <taxon>Oryza sativa</taxon>
    </lineage>
</organism>
<keyword id="KW-0150">Chloroplast</keyword>
<keyword id="KW-0472">Membrane</keyword>
<keyword id="KW-0602">Photosynthesis</keyword>
<keyword id="KW-0604">Photosystem II</keyword>
<keyword id="KW-0934">Plastid</keyword>
<keyword id="KW-0674">Reaction center</keyword>
<keyword id="KW-1185">Reference proteome</keyword>
<keyword id="KW-0793">Thylakoid</keyword>
<keyword id="KW-0812">Transmembrane</keyword>
<keyword id="KW-1133">Transmembrane helix</keyword>
<reference key="1">
    <citation type="journal article" date="1989" name="Mol. Gen. Genet.">
        <title>The complete sequence of the rice (Oryza sativa) chloroplast genome: intermolecular recombination between distinct tRNA genes accounts for a major plastid DNA inversion during the evolution of the cereals.</title>
        <authorList>
            <person name="Hiratsuka J."/>
            <person name="Shimada H."/>
            <person name="Whittier R."/>
            <person name="Ishibashi T."/>
            <person name="Sakamoto M."/>
            <person name="Mori M."/>
            <person name="Kondo C."/>
            <person name="Honji Y."/>
            <person name="Sun C.-R."/>
            <person name="Meng B.-Y."/>
            <person name="Li Y.-Q."/>
            <person name="Kanno A."/>
            <person name="Nishizawa Y."/>
            <person name="Hirai A."/>
            <person name="Shinozaki K."/>
            <person name="Sugiura M."/>
        </authorList>
    </citation>
    <scope>NUCLEOTIDE SEQUENCE [LARGE SCALE GENOMIC DNA]</scope>
    <source>
        <strain>cv. Nipponbare</strain>
    </source>
</reference>
<reference key="2">
    <citation type="journal article" date="2004" name="Plant Physiol.">
        <title>A comparison of rice chloroplast genomes.</title>
        <authorList>
            <person name="Tang J."/>
            <person name="Xia H."/>
            <person name="Cao M."/>
            <person name="Zhang X."/>
            <person name="Zeng W."/>
            <person name="Hu S."/>
            <person name="Tong W."/>
            <person name="Wang J."/>
            <person name="Wang J."/>
            <person name="Yu J."/>
            <person name="Yang H."/>
            <person name="Zhu L."/>
        </authorList>
    </citation>
    <scope>NUCLEOTIDE SEQUENCE [LARGE SCALE GENOMIC DNA]</scope>
    <source>
        <strain>cv. Nipponbare</strain>
    </source>
</reference>
<feature type="chain" id="PRO_0000219754" description="Photosystem II reaction center protein L">
    <location>
        <begin position="1"/>
        <end position="38"/>
    </location>
</feature>
<feature type="transmembrane region" description="Helical" evidence="1">
    <location>
        <begin position="17"/>
        <end position="37"/>
    </location>
</feature>
<dbReference type="EMBL" id="X15901">
    <property type="protein sequence ID" value="CAA33963.1"/>
    <property type="molecule type" value="Genomic_DNA"/>
</dbReference>
<dbReference type="EMBL" id="AY522330">
    <property type="status" value="NOT_ANNOTATED_CDS"/>
    <property type="molecule type" value="Genomic_DNA"/>
</dbReference>
<dbReference type="PIR" id="JQ0241">
    <property type="entry name" value="F2RZL"/>
</dbReference>
<dbReference type="RefSeq" id="NP_039401.1">
    <property type="nucleotide sequence ID" value="NC_001320.1"/>
</dbReference>
<dbReference type="SMR" id="P60137"/>
<dbReference type="FunCoup" id="P60137">
    <property type="interactions" value="155"/>
</dbReference>
<dbReference type="STRING" id="39947.P60137"/>
<dbReference type="PaxDb" id="39947-P60137"/>
<dbReference type="EnsemblPlants" id="Os03t0667201-00">
    <property type="protein sequence ID" value="Os03t0667201-00"/>
    <property type="gene ID" value="Os03g0667201"/>
</dbReference>
<dbReference type="EnsemblPlants" id="transcript-psbL">
    <property type="protein sequence ID" value="cds-CAA33963.1"/>
    <property type="gene ID" value="gene-psbL"/>
</dbReference>
<dbReference type="GeneID" id="3131418"/>
<dbReference type="Gramene" id="Os03t0667201-00">
    <property type="protein sequence ID" value="Os03t0667201-00"/>
    <property type="gene ID" value="Os03g0667201"/>
</dbReference>
<dbReference type="Gramene" id="transcript-psbL">
    <property type="protein sequence ID" value="cds-CAA33963.1"/>
    <property type="gene ID" value="gene-psbL"/>
</dbReference>
<dbReference type="KEGG" id="dosa:psbL"/>
<dbReference type="KEGG" id="osa:3131418"/>
<dbReference type="eggNOG" id="ENOG502R356">
    <property type="taxonomic scope" value="Eukaryota"/>
</dbReference>
<dbReference type="HOGENOM" id="CLU_214425_0_0_1"/>
<dbReference type="InParanoid" id="P60137"/>
<dbReference type="OrthoDB" id="589260at2759"/>
<dbReference type="Proteomes" id="UP000059680">
    <property type="component" value="Chloroplast"/>
</dbReference>
<dbReference type="ExpressionAtlas" id="P60137">
    <property type="expression patterns" value="baseline and differential"/>
</dbReference>
<dbReference type="GO" id="GO:0009535">
    <property type="term" value="C:chloroplast thylakoid membrane"/>
    <property type="evidence" value="ECO:0007669"/>
    <property type="project" value="UniProtKB-SubCell"/>
</dbReference>
<dbReference type="GO" id="GO:0009539">
    <property type="term" value="C:photosystem II reaction center"/>
    <property type="evidence" value="ECO:0007669"/>
    <property type="project" value="InterPro"/>
</dbReference>
<dbReference type="GO" id="GO:0009536">
    <property type="term" value="C:plastid"/>
    <property type="evidence" value="ECO:0000305"/>
    <property type="project" value="Gramene"/>
</dbReference>
<dbReference type="GO" id="GO:0015979">
    <property type="term" value="P:photosynthesis"/>
    <property type="evidence" value="ECO:0007669"/>
    <property type="project" value="UniProtKB-UniRule"/>
</dbReference>
<dbReference type="HAMAP" id="MF_01317">
    <property type="entry name" value="PSII_PsbL"/>
    <property type="match status" value="1"/>
</dbReference>
<dbReference type="InterPro" id="IPR003372">
    <property type="entry name" value="PSII_PsbL"/>
</dbReference>
<dbReference type="InterPro" id="IPR037266">
    <property type="entry name" value="PSII_PsbL_sf"/>
</dbReference>
<dbReference type="NCBIfam" id="NF001972">
    <property type="entry name" value="PRK00753.1"/>
    <property type="match status" value="1"/>
</dbReference>
<dbReference type="Pfam" id="PF02419">
    <property type="entry name" value="PsbL"/>
    <property type="match status" value="1"/>
</dbReference>
<dbReference type="SUPFAM" id="SSF161017">
    <property type="entry name" value="Photosystem II reaction center protein L, PsbL"/>
    <property type="match status" value="1"/>
</dbReference>
<name>PSBL_ORYSJ</name>
<accession>P60137</accession>
<accession>O47030</accession>
<accession>P12166</accession>
<accession>P12167</accession>
<accession>Q34007</accession>
<comment type="function">
    <text evidence="1">One of the components of the core complex of photosystem II (PSII). PSII is a light-driven water:plastoquinone oxidoreductase that uses light energy to abstract electrons from H(2)O, generating O(2) and a proton gradient subsequently used for ATP formation. It consists of a core antenna complex that captures photons, and an electron transfer chain that converts photonic excitation into a charge separation. This subunit is found at the monomer-monomer interface and is required for correct PSII assembly and/or dimerization.</text>
</comment>
<comment type="subunit">
    <text evidence="1">PSII is composed of 1 copy each of membrane proteins PsbA, PsbB, PsbC, PsbD, PsbE, PsbF, PsbH, PsbI, PsbJ, PsbK, PsbL, PsbM, PsbT, PsbX, PsbY, PsbZ, Psb30/Ycf12, at least 3 peripheral proteins of the oxygen-evolving complex and a large number of cofactors. It forms dimeric complexes.</text>
</comment>
<comment type="subcellular location">
    <subcellularLocation>
        <location evidence="1">Plastid</location>
        <location evidence="1">Chloroplast thylakoid membrane</location>
        <topology evidence="1">Single-pass membrane protein</topology>
    </subcellularLocation>
</comment>
<comment type="similarity">
    <text evidence="1">Belongs to the PsbL family.</text>
</comment>
<evidence type="ECO:0000255" key="1">
    <source>
        <dbReference type="HAMAP-Rule" id="MF_01317"/>
    </source>
</evidence>
<sequence>MTQSNPNEQNVELNRTSLYWGLLLIFVLAVLFSNYFFN</sequence>